<reference key="1">
    <citation type="journal article" date="2000" name="Biochem. Biophys. Res. Commun.">
        <title>TUBA8: a new tissue-specific isoform of alpha-tubulin that is highly conserved in human and mouse.</title>
        <authorList>
            <person name="Stanchi F."/>
            <person name="Corso V."/>
            <person name="Scannapieco P."/>
            <person name="Ievolella C."/>
            <person name="Negrisolo E."/>
            <person name="Tiso N."/>
            <person name="Lanfranchi G."/>
            <person name="Valle G."/>
        </authorList>
    </citation>
    <scope>NUCLEOTIDE SEQUENCE [MRNA]</scope>
    <source>
        <tissue>Skeletal muscle</tissue>
    </source>
</reference>
<reference key="2">
    <citation type="journal article" date="2010" name="Am. J. Hum. Genet.">
        <title>Tuba8 is expressed at low levels in the developing mouse and human brain.</title>
        <authorList>
            <person name="Braun A."/>
            <person name="Breuss M."/>
            <person name="Salzer M.C."/>
            <person name="Flint J."/>
            <person name="Cowan N.J."/>
            <person name="Keays D.A."/>
        </authorList>
    </citation>
    <scope>NUCLEOTIDE SEQUENCE [MRNA]</scope>
    <scope>TISSUE SPECIFICITY</scope>
    <scope>DEVELOPMENTAL STAGE</scope>
</reference>
<reference key="3">
    <citation type="submission" date="2005-07" db="EMBL/GenBank/DDBJ databases">
        <authorList>
            <person name="Mural R.J."/>
            <person name="Adams M.D."/>
            <person name="Myers E.W."/>
            <person name="Smith H.O."/>
            <person name="Venter J.C."/>
        </authorList>
    </citation>
    <scope>NUCLEOTIDE SEQUENCE [LARGE SCALE GENOMIC DNA]</scope>
    <source>
        <strain>C57BL/6J</strain>
        <tissue>Olfactory bulb</tissue>
    </source>
</reference>
<reference key="4">
    <citation type="journal article" date="2004" name="Genome Res.">
        <title>The status, quality, and expansion of the NIH full-length cDNA project: the Mammalian Gene Collection (MGC).</title>
        <authorList>
            <consortium name="The MGC Project Team"/>
        </authorList>
    </citation>
    <scope>NUCLEOTIDE SEQUENCE [LARGE SCALE MRNA]</scope>
    <source>
        <strain>C57BL/6J</strain>
        <tissue>Eye</tissue>
    </source>
</reference>
<reference key="5">
    <citation type="journal article" date="2005" name="Science">
        <title>The transcriptional landscape of the mammalian genome.</title>
        <authorList>
            <person name="Carninci P."/>
            <person name="Kasukawa T."/>
            <person name="Katayama S."/>
            <person name="Gough J."/>
            <person name="Frith M.C."/>
            <person name="Maeda N."/>
            <person name="Oyama R."/>
            <person name="Ravasi T."/>
            <person name="Lenhard B."/>
            <person name="Wells C."/>
            <person name="Kodzius R."/>
            <person name="Shimokawa K."/>
            <person name="Bajic V.B."/>
            <person name="Brenner S.E."/>
            <person name="Batalov S."/>
            <person name="Forrest A.R."/>
            <person name="Zavolan M."/>
            <person name="Davis M.J."/>
            <person name="Wilming L.G."/>
            <person name="Aidinis V."/>
            <person name="Allen J.E."/>
            <person name="Ambesi-Impiombato A."/>
            <person name="Apweiler R."/>
            <person name="Aturaliya R.N."/>
            <person name="Bailey T.L."/>
            <person name="Bansal M."/>
            <person name="Baxter L."/>
            <person name="Beisel K.W."/>
            <person name="Bersano T."/>
            <person name="Bono H."/>
            <person name="Chalk A.M."/>
            <person name="Chiu K.P."/>
            <person name="Choudhary V."/>
            <person name="Christoffels A."/>
            <person name="Clutterbuck D.R."/>
            <person name="Crowe M.L."/>
            <person name="Dalla E."/>
            <person name="Dalrymple B.P."/>
            <person name="de Bono B."/>
            <person name="Della Gatta G."/>
            <person name="di Bernardo D."/>
            <person name="Down T."/>
            <person name="Engstrom P."/>
            <person name="Fagiolini M."/>
            <person name="Faulkner G."/>
            <person name="Fletcher C.F."/>
            <person name="Fukushima T."/>
            <person name="Furuno M."/>
            <person name="Futaki S."/>
            <person name="Gariboldi M."/>
            <person name="Georgii-Hemming P."/>
            <person name="Gingeras T.R."/>
            <person name="Gojobori T."/>
            <person name="Green R.E."/>
            <person name="Gustincich S."/>
            <person name="Harbers M."/>
            <person name="Hayashi Y."/>
            <person name="Hensch T.K."/>
            <person name="Hirokawa N."/>
            <person name="Hill D."/>
            <person name="Huminiecki L."/>
            <person name="Iacono M."/>
            <person name="Ikeo K."/>
            <person name="Iwama A."/>
            <person name="Ishikawa T."/>
            <person name="Jakt M."/>
            <person name="Kanapin A."/>
            <person name="Katoh M."/>
            <person name="Kawasawa Y."/>
            <person name="Kelso J."/>
            <person name="Kitamura H."/>
            <person name="Kitano H."/>
            <person name="Kollias G."/>
            <person name="Krishnan S.P."/>
            <person name="Kruger A."/>
            <person name="Kummerfeld S.K."/>
            <person name="Kurochkin I.V."/>
            <person name="Lareau L.F."/>
            <person name="Lazarevic D."/>
            <person name="Lipovich L."/>
            <person name="Liu J."/>
            <person name="Liuni S."/>
            <person name="McWilliam S."/>
            <person name="Madan Babu M."/>
            <person name="Madera M."/>
            <person name="Marchionni L."/>
            <person name="Matsuda H."/>
            <person name="Matsuzawa S."/>
            <person name="Miki H."/>
            <person name="Mignone F."/>
            <person name="Miyake S."/>
            <person name="Morris K."/>
            <person name="Mottagui-Tabar S."/>
            <person name="Mulder N."/>
            <person name="Nakano N."/>
            <person name="Nakauchi H."/>
            <person name="Ng P."/>
            <person name="Nilsson R."/>
            <person name="Nishiguchi S."/>
            <person name="Nishikawa S."/>
            <person name="Nori F."/>
            <person name="Ohara O."/>
            <person name="Okazaki Y."/>
            <person name="Orlando V."/>
            <person name="Pang K.C."/>
            <person name="Pavan W.J."/>
            <person name="Pavesi G."/>
            <person name="Pesole G."/>
            <person name="Petrovsky N."/>
            <person name="Piazza S."/>
            <person name="Reed J."/>
            <person name="Reid J.F."/>
            <person name="Ring B.Z."/>
            <person name="Ringwald M."/>
            <person name="Rost B."/>
            <person name="Ruan Y."/>
            <person name="Salzberg S.L."/>
            <person name="Sandelin A."/>
            <person name="Schneider C."/>
            <person name="Schoenbach C."/>
            <person name="Sekiguchi K."/>
            <person name="Semple C.A."/>
            <person name="Seno S."/>
            <person name="Sessa L."/>
            <person name="Sheng Y."/>
            <person name="Shibata Y."/>
            <person name="Shimada H."/>
            <person name="Shimada K."/>
            <person name="Silva D."/>
            <person name="Sinclair B."/>
            <person name="Sperling S."/>
            <person name="Stupka E."/>
            <person name="Sugiura K."/>
            <person name="Sultana R."/>
            <person name="Takenaka Y."/>
            <person name="Taki K."/>
            <person name="Tammoja K."/>
            <person name="Tan S.L."/>
            <person name="Tang S."/>
            <person name="Taylor M.S."/>
            <person name="Tegner J."/>
            <person name="Teichmann S.A."/>
            <person name="Ueda H.R."/>
            <person name="van Nimwegen E."/>
            <person name="Verardo R."/>
            <person name="Wei C.L."/>
            <person name="Yagi K."/>
            <person name="Yamanishi H."/>
            <person name="Zabarovsky E."/>
            <person name="Zhu S."/>
            <person name="Zimmer A."/>
            <person name="Hide W."/>
            <person name="Bult C."/>
            <person name="Grimmond S.M."/>
            <person name="Teasdale R.D."/>
            <person name="Liu E.T."/>
            <person name="Brusic V."/>
            <person name="Quackenbush J."/>
            <person name="Wahlestedt C."/>
            <person name="Mattick J.S."/>
            <person name="Hume D.A."/>
            <person name="Kai C."/>
            <person name="Sasaki D."/>
            <person name="Tomaru Y."/>
            <person name="Fukuda S."/>
            <person name="Kanamori-Katayama M."/>
            <person name="Suzuki M."/>
            <person name="Aoki J."/>
            <person name="Arakawa T."/>
            <person name="Iida J."/>
            <person name="Imamura K."/>
            <person name="Itoh M."/>
            <person name="Kato T."/>
            <person name="Kawaji H."/>
            <person name="Kawagashira N."/>
            <person name="Kawashima T."/>
            <person name="Kojima M."/>
            <person name="Kondo S."/>
            <person name="Konno H."/>
            <person name="Nakano K."/>
            <person name="Ninomiya N."/>
            <person name="Nishio T."/>
            <person name="Okada M."/>
            <person name="Plessy C."/>
            <person name="Shibata K."/>
            <person name="Shiraki T."/>
            <person name="Suzuki S."/>
            <person name="Tagami M."/>
            <person name="Waki K."/>
            <person name="Watahiki A."/>
            <person name="Okamura-Oho Y."/>
            <person name="Suzuki H."/>
            <person name="Kawai J."/>
            <person name="Hayashizaki Y."/>
        </authorList>
    </citation>
    <scope>NUCLEOTIDE SEQUENCE [LARGE SCALE MRNA] OF 118-449</scope>
    <source>
        <strain>C57BL/6J</strain>
        <tissue>Tongue</tissue>
    </source>
</reference>
<reference key="6">
    <citation type="journal article" date="2005" name="Science">
        <title>Tubulin polyglutamylase enzymes are members of the TTL domain protein family.</title>
        <authorList>
            <person name="Janke C."/>
            <person name="Rogowski K."/>
            <person name="Wloga D."/>
            <person name="Regnard C."/>
            <person name="Kajava A.V."/>
            <person name="Strub J.-M."/>
            <person name="Temurak N."/>
            <person name="van Dijk J."/>
            <person name="Boucher D."/>
            <person name="van Dorsselaer A."/>
            <person name="Suryavanshi S."/>
            <person name="Gaertig J."/>
            <person name="Edde B."/>
        </authorList>
    </citation>
    <scope>GLUTAMYLATION</scope>
</reference>
<reference key="7">
    <citation type="journal article" date="2009" name="Am. J. Hum. Genet.">
        <title>Mutation of the variant alpha-tubulin TUBA8 results in polymicrogyria with optic nerve hypoplasia.</title>
        <authorList>
            <person name="Abdollahi M.R."/>
            <person name="Morrison E."/>
            <person name="Sirey T."/>
            <person name="Molnar Z."/>
            <person name="Hayward B.E."/>
            <person name="Carr I.M."/>
            <person name="Springell K."/>
            <person name="Woods C.G."/>
            <person name="Ahmed M."/>
            <person name="Hattingh L."/>
            <person name="Corry P."/>
            <person name="Pilz D.T."/>
            <person name="Stoodley N."/>
            <person name="Crow Y."/>
            <person name="Taylor G.R."/>
            <person name="Bonthron D.T."/>
            <person name="Sheridan E."/>
        </authorList>
    </citation>
    <scope>DEVELOPMENTAL STAGE</scope>
</reference>
<reference key="8">
    <citation type="journal article" date="2009" name="Cell">
        <title>Evolutionary divergence of enzymatic mechanisms for posttranslational polyglycylation.</title>
        <authorList>
            <person name="Rogowski K."/>
            <person name="Juge F."/>
            <person name="van Dijk J."/>
            <person name="Wloga D."/>
            <person name="Strub J.-M."/>
            <person name="Levilliers N."/>
            <person name="Thomas D."/>
            <person name="Bre M.-H."/>
            <person name="Van Dorsselaer A."/>
            <person name="Gaertig J."/>
            <person name="Janke C."/>
        </authorList>
    </citation>
    <scope>GLYCYLATION</scope>
</reference>
<reference key="9">
    <citation type="journal article" date="2010" name="Cell">
        <title>A tissue-specific atlas of mouse protein phosphorylation and expression.</title>
        <authorList>
            <person name="Huttlin E.L."/>
            <person name="Jedrychowski M.P."/>
            <person name="Elias J.E."/>
            <person name="Goswami T."/>
            <person name="Rad R."/>
            <person name="Beausoleil S.A."/>
            <person name="Villen J."/>
            <person name="Haas W."/>
            <person name="Sowa M.E."/>
            <person name="Gygi S.P."/>
        </authorList>
    </citation>
    <scope>IDENTIFICATION BY MASS SPECTROMETRY [LARGE SCALE ANALYSIS]</scope>
    <source>
        <tissue>Brain</tissue>
        <tissue>Brown adipose tissue</tissue>
        <tissue>Heart</tissue>
        <tissue>Lung</tissue>
        <tissue>Testis</tissue>
    </source>
</reference>
<reference key="10">
    <citation type="journal article" date="2013" name="J. Cell Biol.">
        <title>Tubulin glycylases and glutamylases have distinct functions in stabilization and motility of ependymal cilia.</title>
        <authorList>
            <person name="Bosch Grau M."/>
            <person name="Gonzalez Curto G."/>
            <person name="Rocha C."/>
            <person name="Magiera M.M."/>
            <person name="Marques Sousa P."/>
            <person name="Giordano T."/>
            <person name="Spassky N."/>
            <person name="Janke C."/>
        </authorList>
    </citation>
    <scope>GLYCYLATION</scope>
    <scope>GLUTAMYLATION</scope>
</reference>
<reference key="11">
    <citation type="journal article" date="2021" name="Science">
        <title>Tubulin glycylation controls axonemal dynein activity, flagellar beat, and male fertility.</title>
        <authorList>
            <person name="Gadadhar S."/>
            <person name="Alvarez Viar G."/>
            <person name="Hansen J.N."/>
            <person name="Gong A."/>
            <person name="Kostarev A."/>
            <person name="Ialy-Radio C."/>
            <person name="Leboucher S."/>
            <person name="Whitfield M."/>
            <person name="Ziyyat A."/>
            <person name="Toure A."/>
            <person name="Alvarez L."/>
            <person name="Pigino G."/>
            <person name="Janke C."/>
        </authorList>
    </citation>
    <scope>GLYCYLATION</scope>
</reference>
<gene>
    <name type="primary">Tuba8</name>
</gene>
<accession>Q9JJZ2</accession>
<accession>D4P911</accession>
<accession>Q9CV57</accession>
<comment type="function">
    <text>Tubulin is the major constituent of microtubules, a cylinder consisting of laterally associated linear protofilaments composed of alpha- and beta-tubulin heterodimers. Microtubules grow by the addition of GTP-tubulin dimers to the microtubule end, where a stabilizing cap forms. Below the cap, tubulin dimers are in GDP-bound state, owing to GTPase activity of alpha-tubulin.</text>
</comment>
<comment type="catalytic activity">
    <reaction evidence="1">
        <text>GTP + H2O = GDP + phosphate + H(+)</text>
        <dbReference type="Rhea" id="RHEA:19669"/>
        <dbReference type="ChEBI" id="CHEBI:15377"/>
        <dbReference type="ChEBI" id="CHEBI:15378"/>
        <dbReference type="ChEBI" id="CHEBI:37565"/>
        <dbReference type="ChEBI" id="CHEBI:43474"/>
        <dbReference type="ChEBI" id="CHEBI:58189"/>
    </reaction>
    <physiologicalReaction direction="left-to-right" evidence="1">
        <dbReference type="Rhea" id="RHEA:19670"/>
    </physiologicalReaction>
</comment>
<comment type="cofactor">
    <cofactor evidence="1">
        <name>Mg(2+)</name>
        <dbReference type="ChEBI" id="CHEBI:18420"/>
    </cofactor>
</comment>
<comment type="subunit">
    <text>Dimer of alpha and beta chains. A typical microtubule is a hollow water-filled tube with an outer diameter of 25 nm and an inner diameter of 15 nM. Alpha-beta heterodimers associate head-to-tail to form protofilaments running lengthwise along the microtubule wall with the beta-tubulin subunit facing the microtubule plus end conferring a structural polarity. Microtubules usually have 13 protofilaments but different protofilament numbers can be found in some organisms and specialized cells.</text>
</comment>
<comment type="subcellular location">
    <subcellularLocation>
        <location>Cytoplasm</location>
        <location>Cytoskeleton</location>
    </subcellularLocation>
</comment>
<comment type="tissue specificity">
    <text evidence="7">Expressed at highest levels in the testis, followed by skeletal and heart muscle. Expressed at low levels in the developing brain.</text>
</comment>
<comment type="developmental stage">
    <text evidence="6 7">At embryonic day (E) 13.5, expressed in the cortical preplate and cingulate cortex. By 15.5 dpc, the strongest expression is seen in the cortical plate. By 18.5 dpc, cortical expression is most intense in the upper layers and subplate. There is strong expression in the areas CA1-3 of the hippocampus. At P0, cortical expression is strongest in the dense cortical plate and subplate. Hippocampal expression is more intense in areas CA1-3 than in the dentate gyrus. At P8, lamination is almost complete and cortical expression is strongest in layers II-III and V and the subplate. There is also expression in the mediodorsal nuclei of the thalamus, the mitral cell layer of the olfactory bulb, and the external granular layer, molecular layer, and internal granular cell layer of the cerebellum.</text>
</comment>
<comment type="domain">
    <text evidence="1">The MREC motif may be critical for tubulin autoregulation.</text>
</comment>
<comment type="PTM">
    <text evidence="5 8 9">Some glutamate residues at the C-terminus are polyglycylated, resulting in polyglycine chains on the gamma-carboxyl group. Glycylation is mainly limited to tubulin incorporated into axonemes (cilia and flagella) whereas glutamylation is prevalent in neuronal cells, centrioles, axonemes, and the mitotic spindle. Both modifications can coexist on the same protein on adjacent residues, and lowering polyglycylation levels increases polyglutamylation, and reciprocally. Cilia and flagella glycylation is required for their stability and maintenance. Flagella glycylation controls sperm motility (PubMed:33414192).</text>
</comment>
<comment type="PTM">
    <text evidence="2 4 8">Some glutamate residues at the C-terminus are polyglutamylated, resulting in polyglutamate chains on the gamma-carboxyl group (PubMed:15890843). Polyglutamylation plays a key role in microtubule severing by spastin (SPAST). SPAST preferentially recognizes and acts on microtubules decorated with short polyglutamate tails: severing activity by SPAST increases as the number of glutamates per tubulin rises from one to eight, but decreases beyond this glutamylation threshold (By similarity). Glutamylation is also involved in cilia motility (PubMed:23897886).</text>
</comment>
<comment type="PTM">
    <text evidence="3">The C-terminal phenylalanine residue is cleaved by MATCAP1/KIAA0895L.</text>
</comment>
<comment type="miscellaneous">
    <text evidence="3">This tubulin does not have a C-terminal tyrosine; however, its C-terminal phenylalanine residue can be cleaved.</text>
</comment>
<comment type="similarity">
    <text evidence="10">Belongs to the tubulin family.</text>
</comment>
<keyword id="KW-0963">Cytoplasm</keyword>
<keyword id="KW-0206">Cytoskeleton</keyword>
<keyword id="KW-0342">GTP-binding</keyword>
<keyword id="KW-0378">Hydrolase</keyword>
<keyword id="KW-0460">Magnesium</keyword>
<keyword id="KW-0479">Metal-binding</keyword>
<keyword id="KW-0493">Microtubule</keyword>
<keyword id="KW-0547">Nucleotide-binding</keyword>
<keyword id="KW-1185">Reference proteome</keyword>
<proteinExistence type="evidence at protein level"/>
<organism>
    <name type="scientific">Mus musculus</name>
    <name type="common">Mouse</name>
    <dbReference type="NCBI Taxonomy" id="10090"/>
    <lineage>
        <taxon>Eukaryota</taxon>
        <taxon>Metazoa</taxon>
        <taxon>Chordata</taxon>
        <taxon>Craniata</taxon>
        <taxon>Vertebrata</taxon>
        <taxon>Euteleostomi</taxon>
        <taxon>Mammalia</taxon>
        <taxon>Eutheria</taxon>
        <taxon>Euarchontoglires</taxon>
        <taxon>Glires</taxon>
        <taxon>Rodentia</taxon>
        <taxon>Myomorpha</taxon>
        <taxon>Muroidea</taxon>
        <taxon>Muridae</taxon>
        <taxon>Murinae</taxon>
        <taxon>Mus</taxon>
        <taxon>Mus</taxon>
    </lineage>
</organism>
<evidence type="ECO:0000250" key="1">
    <source>
        <dbReference type="UniProtKB" id="P68363"/>
    </source>
</evidence>
<evidence type="ECO:0000250" key="2">
    <source>
        <dbReference type="UniProtKB" id="Q71U36"/>
    </source>
</evidence>
<evidence type="ECO:0000250" key="3">
    <source>
        <dbReference type="UniProtKB" id="Q9NY65"/>
    </source>
</evidence>
<evidence type="ECO:0000269" key="4">
    <source>
    </source>
</evidence>
<evidence type="ECO:0000269" key="5">
    <source>
    </source>
</evidence>
<evidence type="ECO:0000269" key="6">
    <source>
    </source>
</evidence>
<evidence type="ECO:0000269" key="7">
    <source>
    </source>
</evidence>
<evidence type="ECO:0000269" key="8">
    <source>
    </source>
</evidence>
<evidence type="ECO:0000269" key="9">
    <source>
    </source>
</evidence>
<evidence type="ECO:0000305" key="10"/>
<sequence>MRECISVHVGQAGVQIGNACWELFCLEHGIQADGTFGTQASKINDDDSFTTFFSETGNGKHVPRAVMVDLEPTVVDEVRAGTYRQLFHPEQLITGKEDAANNYARGHYTVGKESIDLVLDRIRKLTDACSGLQGFLIFHSFGGGTGSGFTSLLMERLSLDYGKKSKLEFAIYPAPQVSTAVVEPYNSILTTHTTLEHSDCAFMVDNEAIYDICRRNLDIERPTYTNLNRLISQIVSSITASLRFDGALNVDLTEFQTNLVPYPRIHFPLVTYAPIISAEKAYHEQLSVAEITSSCFEPNSQMVKCDPRHGKYMACCMLYRGDVVPKDVNVAIAAIKTKRTIQFVDWCPTGFKVGINYQPPTVVPGGDLAKVQRAVCMLSNTTAIAEAWARLDHKFDLMYAKRAFVHWYVGEGMEEGEFSEAREDLAALEKDYEEVGTDSFEEENEGEEF</sequence>
<feature type="chain" id="PRO_0000048125" description="Tubulin alpha-8 chain">
    <location>
        <begin position="1"/>
        <end position="449"/>
    </location>
</feature>
<feature type="chain" id="PRO_0000456435" description="Dephenylalaninated tubulin alpha-8 chain" evidence="3">
    <location>
        <begin position="1"/>
        <end position="448"/>
    </location>
</feature>
<feature type="short sequence motif" description="MREC motif" evidence="1">
    <location>
        <begin position="1"/>
        <end position="4"/>
    </location>
</feature>
<feature type="active site" evidence="1">
    <location>
        <position position="254"/>
    </location>
</feature>
<feature type="binding site" evidence="1">
    <location>
        <position position="11"/>
    </location>
    <ligand>
        <name>GTP</name>
        <dbReference type="ChEBI" id="CHEBI:37565"/>
    </ligand>
</feature>
<feature type="binding site" evidence="1">
    <location>
        <position position="71"/>
    </location>
    <ligand>
        <name>GTP</name>
        <dbReference type="ChEBI" id="CHEBI:37565"/>
    </ligand>
</feature>
<feature type="binding site" evidence="1">
    <location>
        <position position="71"/>
    </location>
    <ligand>
        <name>Mg(2+)</name>
        <dbReference type="ChEBI" id="CHEBI:18420"/>
    </ligand>
</feature>
<feature type="binding site" evidence="1">
    <location>
        <position position="140"/>
    </location>
    <ligand>
        <name>GTP</name>
        <dbReference type="ChEBI" id="CHEBI:37565"/>
    </ligand>
</feature>
<feature type="binding site" evidence="1">
    <location>
        <position position="144"/>
    </location>
    <ligand>
        <name>GTP</name>
        <dbReference type="ChEBI" id="CHEBI:37565"/>
    </ligand>
</feature>
<feature type="binding site" evidence="1">
    <location>
        <position position="145"/>
    </location>
    <ligand>
        <name>GTP</name>
        <dbReference type="ChEBI" id="CHEBI:37565"/>
    </ligand>
</feature>
<feature type="binding site" evidence="1">
    <location>
        <position position="179"/>
    </location>
    <ligand>
        <name>GTP</name>
        <dbReference type="ChEBI" id="CHEBI:37565"/>
    </ligand>
</feature>
<feature type="binding site" evidence="1">
    <location>
        <position position="206"/>
    </location>
    <ligand>
        <name>GTP</name>
        <dbReference type="ChEBI" id="CHEBI:37565"/>
    </ligand>
</feature>
<feature type="binding site" evidence="1">
    <location>
        <position position="228"/>
    </location>
    <ligand>
        <name>GTP</name>
        <dbReference type="ChEBI" id="CHEBI:37565"/>
    </ligand>
</feature>
<feature type="sequence conflict" description="In Ref. 5; BAB26288." evidence="10" ref="5">
    <original>E</original>
    <variation>G</variation>
    <location>
        <position position="447"/>
    </location>
</feature>
<name>TBA8_MOUSE</name>
<protein>
    <recommendedName>
        <fullName>Tubulin alpha-8 chain</fullName>
        <ecNumber evidence="1">3.6.5.-</ecNumber>
    </recommendedName>
    <alternativeName>
        <fullName>Alpha-tubulin 8</fullName>
    </alternativeName>
    <component>
        <recommendedName>
            <fullName>Dephenylalaninated tubulin alpha-8 chain</fullName>
        </recommendedName>
    </component>
</protein>
<dbReference type="EC" id="3.6.5.-" evidence="1"/>
<dbReference type="EMBL" id="AJ245923">
    <property type="protein sequence ID" value="CAB88033.1"/>
    <property type="molecule type" value="mRNA"/>
</dbReference>
<dbReference type="EMBL" id="GU591980">
    <property type="protein sequence ID" value="ADD82895.1"/>
    <property type="molecule type" value="mRNA"/>
</dbReference>
<dbReference type="EMBL" id="CH466523">
    <property type="protein sequence ID" value="EDK99659.1"/>
    <property type="molecule type" value="Genomic_DNA"/>
</dbReference>
<dbReference type="EMBL" id="BC017631">
    <property type="protein sequence ID" value="AAH17631.1"/>
    <property type="molecule type" value="mRNA"/>
</dbReference>
<dbReference type="EMBL" id="AK009439">
    <property type="protein sequence ID" value="BAB26288.1"/>
    <property type="molecule type" value="mRNA"/>
</dbReference>
<dbReference type="CCDS" id="CCDS39615.1"/>
<dbReference type="RefSeq" id="NP_059075.1">
    <property type="nucleotide sequence ID" value="NM_017379.2"/>
</dbReference>
<dbReference type="SMR" id="Q9JJZ2"/>
<dbReference type="BioGRID" id="207491">
    <property type="interactions" value="5"/>
</dbReference>
<dbReference type="FunCoup" id="Q9JJZ2">
    <property type="interactions" value="422"/>
</dbReference>
<dbReference type="IntAct" id="Q9JJZ2">
    <property type="interactions" value="4"/>
</dbReference>
<dbReference type="MINT" id="Q9JJZ2"/>
<dbReference type="STRING" id="10090.ENSMUSP00000032233"/>
<dbReference type="GlyGen" id="Q9JJZ2">
    <property type="glycosylation" value="1 site, 1 O-linked glycan (1 site)"/>
</dbReference>
<dbReference type="iPTMnet" id="Q9JJZ2"/>
<dbReference type="PhosphoSitePlus" id="Q9JJZ2"/>
<dbReference type="SwissPalm" id="Q9JJZ2"/>
<dbReference type="jPOST" id="Q9JJZ2"/>
<dbReference type="PaxDb" id="10090-ENSMUSP00000032233"/>
<dbReference type="PeptideAtlas" id="Q9JJZ2"/>
<dbReference type="ProteomicsDB" id="254857"/>
<dbReference type="Pumba" id="Q9JJZ2"/>
<dbReference type="Antibodypedia" id="22762">
    <property type="antibodies" value="212 antibodies from 24 providers"/>
</dbReference>
<dbReference type="DNASU" id="53857"/>
<dbReference type="Ensembl" id="ENSMUST00000032233.9">
    <property type="protein sequence ID" value="ENSMUSP00000032233.8"/>
    <property type="gene ID" value="ENSMUSG00000030137.9"/>
</dbReference>
<dbReference type="GeneID" id="53857"/>
<dbReference type="KEGG" id="mmu:53857"/>
<dbReference type="UCSC" id="uc009dof.1">
    <property type="organism name" value="mouse"/>
</dbReference>
<dbReference type="AGR" id="MGI:1858225"/>
<dbReference type="CTD" id="51807"/>
<dbReference type="MGI" id="MGI:1858225">
    <property type="gene designation" value="Tuba8"/>
</dbReference>
<dbReference type="VEuPathDB" id="HostDB:ENSMUSG00000030137"/>
<dbReference type="eggNOG" id="KOG1376">
    <property type="taxonomic scope" value="Eukaryota"/>
</dbReference>
<dbReference type="GeneTree" id="ENSGT00940000159668"/>
<dbReference type="HOGENOM" id="CLU_015718_0_0_1"/>
<dbReference type="InParanoid" id="Q9JJZ2"/>
<dbReference type="OMA" id="DGTMPTQ"/>
<dbReference type="OrthoDB" id="1662883at2759"/>
<dbReference type="PhylomeDB" id="Q9JJZ2"/>
<dbReference type="TreeFam" id="TF300314"/>
<dbReference type="Reactome" id="R-MMU-190840">
    <property type="pathway name" value="Microtubule-dependent trafficking of connexons from Golgi to the plasma membrane"/>
</dbReference>
<dbReference type="Reactome" id="R-MMU-2132295">
    <property type="pathway name" value="MHC class II antigen presentation"/>
</dbReference>
<dbReference type="Reactome" id="R-MMU-2467813">
    <property type="pathway name" value="Separation of Sister Chromatids"/>
</dbReference>
<dbReference type="Reactome" id="R-MMU-2500257">
    <property type="pathway name" value="Resolution of Sister Chromatid Cohesion"/>
</dbReference>
<dbReference type="Reactome" id="R-MMU-3371497">
    <property type="pathway name" value="HSP90 chaperone cycle for steroid hormone receptors (SHR) in the presence of ligand"/>
</dbReference>
<dbReference type="Reactome" id="R-MMU-380320">
    <property type="pathway name" value="Recruitment of NuMA to mitotic centrosomes"/>
</dbReference>
<dbReference type="Reactome" id="R-MMU-437239">
    <property type="pathway name" value="Recycling pathway of L1"/>
</dbReference>
<dbReference type="Reactome" id="R-MMU-5617833">
    <property type="pathway name" value="Cilium Assembly"/>
</dbReference>
<dbReference type="Reactome" id="R-MMU-5626467">
    <property type="pathway name" value="RHO GTPases activate IQGAPs"/>
</dbReference>
<dbReference type="Reactome" id="R-MMU-5663220">
    <property type="pathway name" value="RHO GTPases Activate Formins"/>
</dbReference>
<dbReference type="Reactome" id="R-MMU-6807878">
    <property type="pathway name" value="COPI-mediated anterograde transport"/>
</dbReference>
<dbReference type="Reactome" id="R-MMU-6811434">
    <property type="pathway name" value="COPI-dependent Golgi-to-ER retrograde traffic"/>
</dbReference>
<dbReference type="Reactome" id="R-MMU-6811436">
    <property type="pathway name" value="COPI-independent Golgi-to-ER retrograde traffic"/>
</dbReference>
<dbReference type="Reactome" id="R-MMU-68877">
    <property type="pathway name" value="Mitotic Prometaphase"/>
</dbReference>
<dbReference type="Reactome" id="R-MMU-8852276">
    <property type="pathway name" value="The role of GTSE1 in G2/M progression after G2 checkpoint"/>
</dbReference>
<dbReference type="Reactome" id="R-MMU-8955332">
    <property type="pathway name" value="Carboxyterminal post-translational modifications of tubulin"/>
</dbReference>
<dbReference type="Reactome" id="R-MMU-9646399">
    <property type="pathway name" value="Aggrephagy"/>
</dbReference>
<dbReference type="Reactome" id="R-MMU-9648025">
    <property type="pathway name" value="EML4 and NUDC in mitotic spindle formation"/>
</dbReference>
<dbReference type="Reactome" id="R-MMU-9668328">
    <property type="pathway name" value="Sealing of the nuclear envelope (NE) by ESCRT-III"/>
</dbReference>
<dbReference type="Reactome" id="R-MMU-983189">
    <property type="pathway name" value="Kinesins"/>
</dbReference>
<dbReference type="Reactome" id="R-MMU-9833482">
    <property type="pathway name" value="PKR-mediated signaling"/>
</dbReference>
<dbReference type="BioGRID-ORCS" id="53857">
    <property type="hits" value="1 hit in 77 CRISPR screens"/>
</dbReference>
<dbReference type="PRO" id="PR:Q9JJZ2"/>
<dbReference type="Proteomes" id="UP000000589">
    <property type="component" value="Chromosome 6"/>
</dbReference>
<dbReference type="RNAct" id="Q9JJZ2">
    <property type="molecule type" value="protein"/>
</dbReference>
<dbReference type="Bgee" id="ENSMUSG00000030137">
    <property type="expression patterns" value="Expressed in hindlimb stylopod muscle and 156 other cell types or tissues"/>
</dbReference>
<dbReference type="GO" id="GO:0001669">
    <property type="term" value="C:acrosomal vesicle"/>
    <property type="evidence" value="ECO:0000315"/>
    <property type="project" value="MGI"/>
</dbReference>
<dbReference type="GO" id="GO:0005737">
    <property type="term" value="C:cytoplasm"/>
    <property type="evidence" value="ECO:0000315"/>
    <property type="project" value="MGI"/>
</dbReference>
<dbReference type="GO" id="GO:0005874">
    <property type="term" value="C:microtubule"/>
    <property type="evidence" value="ECO:0000304"/>
    <property type="project" value="MGI"/>
</dbReference>
<dbReference type="GO" id="GO:0005525">
    <property type="term" value="F:GTP binding"/>
    <property type="evidence" value="ECO:0007669"/>
    <property type="project" value="UniProtKB-KW"/>
</dbReference>
<dbReference type="GO" id="GO:0016787">
    <property type="term" value="F:hydrolase activity"/>
    <property type="evidence" value="ECO:0007669"/>
    <property type="project" value="UniProtKB-KW"/>
</dbReference>
<dbReference type="GO" id="GO:0046872">
    <property type="term" value="F:metal ion binding"/>
    <property type="evidence" value="ECO:0007669"/>
    <property type="project" value="UniProtKB-KW"/>
</dbReference>
<dbReference type="GO" id="GO:0005200">
    <property type="term" value="F:structural constituent of cytoskeleton"/>
    <property type="evidence" value="ECO:0000304"/>
    <property type="project" value="MGI"/>
</dbReference>
<dbReference type="GO" id="GO:0000226">
    <property type="term" value="P:microtubule cytoskeleton organization"/>
    <property type="evidence" value="ECO:0000304"/>
    <property type="project" value="MGI"/>
</dbReference>
<dbReference type="GO" id="GO:0007286">
    <property type="term" value="P:spermatid development"/>
    <property type="evidence" value="ECO:0000315"/>
    <property type="project" value="MGI"/>
</dbReference>
<dbReference type="GO" id="GO:0007283">
    <property type="term" value="P:spermatogenesis"/>
    <property type="evidence" value="ECO:0000315"/>
    <property type="project" value="MGI"/>
</dbReference>
<dbReference type="CDD" id="cd02186">
    <property type="entry name" value="alpha_tubulin"/>
    <property type="match status" value="1"/>
</dbReference>
<dbReference type="FunFam" id="1.10.287.600:FF:000005">
    <property type="entry name" value="Tubulin alpha chain"/>
    <property type="match status" value="1"/>
</dbReference>
<dbReference type="FunFam" id="3.30.1330.20:FF:000001">
    <property type="entry name" value="Tubulin alpha chain"/>
    <property type="match status" value="1"/>
</dbReference>
<dbReference type="FunFam" id="3.40.50.1440:FF:000002">
    <property type="entry name" value="Tubulin alpha chain"/>
    <property type="match status" value="1"/>
</dbReference>
<dbReference type="Gene3D" id="1.10.287.600">
    <property type="entry name" value="Helix hairpin bin"/>
    <property type="match status" value="1"/>
</dbReference>
<dbReference type="Gene3D" id="3.30.1330.20">
    <property type="entry name" value="Tubulin/FtsZ, C-terminal domain"/>
    <property type="match status" value="1"/>
</dbReference>
<dbReference type="Gene3D" id="3.40.50.1440">
    <property type="entry name" value="Tubulin/FtsZ, GTPase domain"/>
    <property type="match status" value="1"/>
</dbReference>
<dbReference type="InterPro" id="IPR002452">
    <property type="entry name" value="Alpha_tubulin"/>
</dbReference>
<dbReference type="InterPro" id="IPR008280">
    <property type="entry name" value="Tub_FtsZ_C"/>
</dbReference>
<dbReference type="InterPro" id="IPR000217">
    <property type="entry name" value="Tubulin"/>
</dbReference>
<dbReference type="InterPro" id="IPR037103">
    <property type="entry name" value="Tubulin/FtsZ-like_C"/>
</dbReference>
<dbReference type="InterPro" id="IPR018316">
    <property type="entry name" value="Tubulin/FtsZ_2-layer-sand-dom"/>
</dbReference>
<dbReference type="InterPro" id="IPR036525">
    <property type="entry name" value="Tubulin/FtsZ_GTPase_sf"/>
</dbReference>
<dbReference type="InterPro" id="IPR023123">
    <property type="entry name" value="Tubulin_C"/>
</dbReference>
<dbReference type="InterPro" id="IPR017975">
    <property type="entry name" value="Tubulin_CS"/>
</dbReference>
<dbReference type="InterPro" id="IPR003008">
    <property type="entry name" value="Tubulin_FtsZ_GTPase"/>
</dbReference>
<dbReference type="PANTHER" id="PTHR11588">
    <property type="entry name" value="TUBULIN"/>
    <property type="match status" value="1"/>
</dbReference>
<dbReference type="Pfam" id="PF00091">
    <property type="entry name" value="Tubulin"/>
    <property type="match status" value="1"/>
</dbReference>
<dbReference type="Pfam" id="PF03953">
    <property type="entry name" value="Tubulin_C"/>
    <property type="match status" value="1"/>
</dbReference>
<dbReference type="PRINTS" id="PR01162">
    <property type="entry name" value="ALPHATUBULIN"/>
</dbReference>
<dbReference type="PRINTS" id="PR01161">
    <property type="entry name" value="TUBULIN"/>
</dbReference>
<dbReference type="SMART" id="SM00864">
    <property type="entry name" value="Tubulin"/>
    <property type="match status" value="1"/>
</dbReference>
<dbReference type="SMART" id="SM00865">
    <property type="entry name" value="Tubulin_C"/>
    <property type="match status" value="1"/>
</dbReference>
<dbReference type="SUPFAM" id="SSF55307">
    <property type="entry name" value="Tubulin C-terminal domain-like"/>
    <property type="match status" value="1"/>
</dbReference>
<dbReference type="SUPFAM" id="SSF52490">
    <property type="entry name" value="Tubulin nucleotide-binding domain-like"/>
    <property type="match status" value="1"/>
</dbReference>
<dbReference type="PROSITE" id="PS00227">
    <property type="entry name" value="TUBULIN"/>
    <property type="match status" value="1"/>
</dbReference>